<accession>Q31LW9</accession>
<gene>
    <name evidence="1" type="primary">leuS</name>
    <name type="ordered locus">Synpcc7942_1920</name>
</gene>
<comment type="catalytic activity">
    <reaction evidence="1">
        <text>tRNA(Leu) + L-leucine + ATP = L-leucyl-tRNA(Leu) + AMP + diphosphate</text>
        <dbReference type="Rhea" id="RHEA:11688"/>
        <dbReference type="Rhea" id="RHEA-COMP:9613"/>
        <dbReference type="Rhea" id="RHEA-COMP:9622"/>
        <dbReference type="ChEBI" id="CHEBI:30616"/>
        <dbReference type="ChEBI" id="CHEBI:33019"/>
        <dbReference type="ChEBI" id="CHEBI:57427"/>
        <dbReference type="ChEBI" id="CHEBI:78442"/>
        <dbReference type="ChEBI" id="CHEBI:78494"/>
        <dbReference type="ChEBI" id="CHEBI:456215"/>
        <dbReference type="EC" id="6.1.1.4"/>
    </reaction>
</comment>
<comment type="subcellular location">
    <subcellularLocation>
        <location evidence="1">Cytoplasm</location>
    </subcellularLocation>
</comment>
<comment type="similarity">
    <text evidence="1">Belongs to the class-I aminoacyl-tRNA synthetase family.</text>
</comment>
<reference key="1">
    <citation type="submission" date="2005-08" db="EMBL/GenBank/DDBJ databases">
        <title>Complete sequence of chromosome 1 of Synechococcus elongatus PCC 7942.</title>
        <authorList>
            <consortium name="US DOE Joint Genome Institute"/>
            <person name="Copeland A."/>
            <person name="Lucas S."/>
            <person name="Lapidus A."/>
            <person name="Barry K."/>
            <person name="Detter J.C."/>
            <person name="Glavina T."/>
            <person name="Hammon N."/>
            <person name="Israni S."/>
            <person name="Pitluck S."/>
            <person name="Schmutz J."/>
            <person name="Larimer F."/>
            <person name="Land M."/>
            <person name="Kyrpides N."/>
            <person name="Lykidis A."/>
            <person name="Golden S."/>
            <person name="Richardson P."/>
        </authorList>
    </citation>
    <scope>NUCLEOTIDE SEQUENCE [LARGE SCALE GENOMIC DNA]</scope>
    <source>
        <strain>ATCC 33912 / PCC 7942 / FACHB-805</strain>
    </source>
</reference>
<keyword id="KW-0030">Aminoacyl-tRNA synthetase</keyword>
<keyword id="KW-0067">ATP-binding</keyword>
<keyword id="KW-0963">Cytoplasm</keyword>
<keyword id="KW-0436">Ligase</keyword>
<keyword id="KW-0547">Nucleotide-binding</keyword>
<keyword id="KW-0648">Protein biosynthesis</keyword>
<keyword id="KW-1185">Reference proteome</keyword>
<sequence>MQNGANSRSQEYQGVSVDSRYDPQAIETKWQQSWAAAQLDRTPEADDRPKFYALSMFPYPSGNLHMGHVRNYTITDAIARVKRRQGFRVLHPMGWDAFGLPAENAAIDRGVQPADWTYQNVAQMREQLKQLGLSYDWDREVTTCSPDYYRWTQWLFLQFFEAGLAYQKEATVNWDPIDQTVLANEQVDSEGRSWRSGAKVERRQLKQWFLKITDYAEELLQDLDQLTGWPERVRLMQANWIGKSTGAYLEFPIVNSSDRVKVFTTRPDTVYGVSYVVLAPEHPLVTQVTTPEQQTAVAAFAAEVSQTSELERTAEDRPKRGVPTGGFVTNPFTGQAVPIWIADYVLVEYGTGAVMGVPAHDSRDFAFAQRYGLPVQPVIQPTEGAIAEPWPAPFTEAGVMVNSGQFDGLSSTEAKAKIIAFAEEQGWGQAHVQYRLRDWLISRQRYWGCPIPIVHCPDCGPVAAADLPVQLPDSVQFSGRGPSPLAQLEDWVTTTCPSCGKPARRETDTMDTFMCSSWYYLRYSDASNPEIAFTKDKVNDWLPVDQYVGGIEHAILHLLYSRFFTKVLRDRGLLSFDEPFKRLLTQGMVQGLTYKNPKTGKYVPSDRISDPSQPVDPDTGDRLEVFFEKMSKSKYNGVDPARVLDRYGADTARMFILFKAPPEKDLEWDDADVEGQFRFLNRVWRLVQTASQVEATTAADDKAEKDLRRAVHTAIQAVTEDLEEDYQLNTAIAELMKLTNALNDAPMPGSPAYLEGVQTLVLLLAPFAPHIAEELWQQLGGERSVHLEGWPVLDESALIVDEIPLVIQIMGKTRGTITVPASADRDQLQQLAENSEIAQRWLDGQTIRKVIVVPGKLVNFVIASP</sequence>
<organism>
    <name type="scientific">Synechococcus elongatus (strain ATCC 33912 / PCC 7942 / FACHB-805)</name>
    <name type="common">Anacystis nidulans R2</name>
    <dbReference type="NCBI Taxonomy" id="1140"/>
    <lineage>
        <taxon>Bacteria</taxon>
        <taxon>Bacillati</taxon>
        <taxon>Cyanobacteriota</taxon>
        <taxon>Cyanophyceae</taxon>
        <taxon>Synechococcales</taxon>
        <taxon>Synechococcaceae</taxon>
        <taxon>Synechococcus</taxon>
    </lineage>
</organism>
<dbReference type="EC" id="6.1.1.4" evidence="1"/>
<dbReference type="EMBL" id="CP000100">
    <property type="protein sequence ID" value="ABB57950.1"/>
    <property type="molecule type" value="Genomic_DNA"/>
</dbReference>
<dbReference type="RefSeq" id="WP_011378240.1">
    <property type="nucleotide sequence ID" value="NZ_JACJTX010000001.1"/>
</dbReference>
<dbReference type="SMR" id="Q31LW9"/>
<dbReference type="STRING" id="1140.Synpcc7942_1920"/>
<dbReference type="PaxDb" id="1140-Synpcc7942_1920"/>
<dbReference type="GeneID" id="72430793"/>
<dbReference type="KEGG" id="syf:Synpcc7942_1920"/>
<dbReference type="eggNOG" id="COG0495">
    <property type="taxonomic scope" value="Bacteria"/>
</dbReference>
<dbReference type="HOGENOM" id="CLU_004427_0_0_3"/>
<dbReference type="OrthoDB" id="9810365at2"/>
<dbReference type="BioCyc" id="SYNEL:SYNPCC7942_1920-MONOMER"/>
<dbReference type="Proteomes" id="UP000889800">
    <property type="component" value="Chromosome"/>
</dbReference>
<dbReference type="GO" id="GO:0005829">
    <property type="term" value="C:cytosol"/>
    <property type="evidence" value="ECO:0007669"/>
    <property type="project" value="TreeGrafter"/>
</dbReference>
<dbReference type="GO" id="GO:0002161">
    <property type="term" value="F:aminoacyl-tRNA deacylase activity"/>
    <property type="evidence" value="ECO:0007669"/>
    <property type="project" value="InterPro"/>
</dbReference>
<dbReference type="GO" id="GO:0005524">
    <property type="term" value="F:ATP binding"/>
    <property type="evidence" value="ECO:0007669"/>
    <property type="project" value="UniProtKB-UniRule"/>
</dbReference>
<dbReference type="GO" id="GO:0004823">
    <property type="term" value="F:leucine-tRNA ligase activity"/>
    <property type="evidence" value="ECO:0007669"/>
    <property type="project" value="UniProtKB-UniRule"/>
</dbReference>
<dbReference type="GO" id="GO:0006429">
    <property type="term" value="P:leucyl-tRNA aminoacylation"/>
    <property type="evidence" value="ECO:0007669"/>
    <property type="project" value="UniProtKB-UniRule"/>
</dbReference>
<dbReference type="CDD" id="cd07958">
    <property type="entry name" value="Anticodon_Ia_Leu_BEm"/>
    <property type="match status" value="1"/>
</dbReference>
<dbReference type="CDD" id="cd00812">
    <property type="entry name" value="LeuRS_core"/>
    <property type="match status" value="1"/>
</dbReference>
<dbReference type="FunFam" id="3.40.50.620:FF:000003">
    <property type="entry name" value="Leucine--tRNA ligase"/>
    <property type="match status" value="1"/>
</dbReference>
<dbReference type="FunFam" id="1.10.730.10:FF:000011">
    <property type="entry name" value="Leucine--tRNA ligase chloroplastic/mitochondrial"/>
    <property type="match status" value="1"/>
</dbReference>
<dbReference type="FunFam" id="3.40.50.620:FF:000100">
    <property type="entry name" value="probable leucine--tRNA ligase, mitochondrial"/>
    <property type="match status" value="1"/>
</dbReference>
<dbReference type="Gene3D" id="3.40.50.620">
    <property type="entry name" value="HUPs"/>
    <property type="match status" value="2"/>
</dbReference>
<dbReference type="Gene3D" id="1.10.730.10">
    <property type="entry name" value="Isoleucyl-tRNA Synthetase, Domain 1"/>
    <property type="match status" value="1"/>
</dbReference>
<dbReference type="HAMAP" id="MF_00049_B">
    <property type="entry name" value="Leu_tRNA_synth_B"/>
    <property type="match status" value="1"/>
</dbReference>
<dbReference type="InterPro" id="IPR001412">
    <property type="entry name" value="aa-tRNA-synth_I_CS"/>
</dbReference>
<dbReference type="InterPro" id="IPR002300">
    <property type="entry name" value="aa-tRNA-synth_Ia"/>
</dbReference>
<dbReference type="InterPro" id="IPR002302">
    <property type="entry name" value="Leu-tRNA-ligase"/>
</dbReference>
<dbReference type="InterPro" id="IPR025709">
    <property type="entry name" value="Leu_tRNA-synth_edit"/>
</dbReference>
<dbReference type="InterPro" id="IPR013155">
    <property type="entry name" value="M/V/L/I-tRNA-synth_anticd-bd"/>
</dbReference>
<dbReference type="InterPro" id="IPR015413">
    <property type="entry name" value="Methionyl/Leucyl_tRNA_Synth"/>
</dbReference>
<dbReference type="InterPro" id="IPR014729">
    <property type="entry name" value="Rossmann-like_a/b/a_fold"/>
</dbReference>
<dbReference type="InterPro" id="IPR009080">
    <property type="entry name" value="tRNAsynth_Ia_anticodon-bd"/>
</dbReference>
<dbReference type="InterPro" id="IPR009008">
    <property type="entry name" value="Val/Leu/Ile-tRNA-synth_edit"/>
</dbReference>
<dbReference type="NCBIfam" id="TIGR00396">
    <property type="entry name" value="leuS_bact"/>
    <property type="match status" value="1"/>
</dbReference>
<dbReference type="PANTHER" id="PTHR43740:SF2">
    <property type="entry name" value="LEUCINE--TRNA LIGASE, MITOCHONDRIAL"/>
    <property type="match status" value="1"/>
</dbReference>
<dbReference type="PANTHER" id="PTHR43740">
    <property type="entry name" value="LEUCYL-TRNA SYNTHETASE"/>
    <property type="match status" value="1"/>
</dbReference>
<dbReference type="Pfam" id="PF08264">
    <property type="entry name" value="Anticodon_1"/>
    <property type="match status" value="1"/>
</dbReference>
<dbReference type="Pfam" id="PF00133">
    <property type="entry name" value="tRNA-synt_1"/>
    <property type="match status" value="2"/>
</dbReference>
<dbReference type="Pfam" id="PF13603">
    <property type="entry name" value="tRNA-synt_1_2"/>
    <property type="match status" value="1"/>
</dbReference>
<dbReference type="Pfam" id="PF09334">
    <property type="entry name" value="tRNA-synt_1g"/>
    <property type="match status" value="1"/>
</dbReference>
<dbReference type="PRINTS" id="PR00985">
    <property type="entry name" value="TRNASYNTHLEU"/>
</dbReference>
<dbReference type="SUPFAM" id="SSF47323">
    <property type="entry name" value="Anticodon-binding domain of a subclass of class I aminoacyl-tRNA synthetases"/>
    <property type="match status" value="1"/>
</dbReference>
<dbReference type="SUPFAM" id="SSF52374">
    <property type="entry name" value="Nucleotidylyl transferase"/>
    <property type="match status" value="1"/>
</dbReference>
<dbReference type="SUPFAM" id="SSF50677">
    <property type="entry name" value="ValRS/IleRS/LeuRS editing domain"/>
    <property type="match status" value="1"/>
</dbReference>
<dbReference type="PROSITE" id="PS00178">
    <property type="entry name" value="AA_TRNA_LIGASE_I"/>
    <property type="match status" value="1"/>
</dbReference>
<protein>
    <recommendedName>
        <fullName evidence="1">Leucine--tRNA ligase</fullName>
        <ecNumber evidence="1">6.1.1.4</ecNumber>
    </recommendedName>
    <alternativeName>
        <fullName evidence="1">Leucyl-tRNA synthetase</fullName>
        <shortName evidence="1">LeuRS</shortName>
    </alternativeName>
</protein>
<name>SYL_SYNE7</name>
<evidence type="ECO:0000255" key="1">
    <source>
        <dbReference type="HAMAP-Rule" id="MF_00049"/>
    </source>
</evidence>
<proteinExistence type="inferred from homology"/>
<feature type="chain" id="PRO_1000009457" description="Leucine--tRNA ligase">
    <location>
        <begin position="1"/>
        <end position="865"/>
    </location>
</feature>
<feature type="short sequence motif" description="'HIGH' region">
    <location>
        <begin position="58"/>
        <end position="68"/>
    </location>
</feature>
<feature type="short sequence motif" description="'KMSKS' region">
    <location>
        <begin position="629"/>
        <end position="633"/>
    </location>
</feature>
<feature type="binding site" evidence="1">
    <location>
        <position position="632"/>
    </location>
    <ligand>
        <name>ATP</name>
        <dbReference type="ChEBI" id="CHEBI:30616"/>
    </ligand>
</feature>